<keyword id="KW-0025">Alternative splicing</keyword>
<keyword id="KW-0597">Phosphoprotein</keyword>
<keyword id="KW-1185">Reference proteome</keyword>
<organism>
    <name type="scientific">Drosophila melanogaster</name>
    <name type="common">Fruit fly</name>
    <dbReference type="NCBI Taxonomy" id="7227"/>
    <lineage>
        <taxon>Eukaryota</taxon>
        <taxon>Metazoa</taxon>
        <taxon>Ecdysozoa</taxon>
        <taxon>Arthropoda</taxon>
        <taxon>Hexapoda</taxon>
        <taxon>Insecta</taxon>
        <taxon>Pterygota</taxon>
        <taxon>Neoptera</taxon>
        <taxon>Endopterygota</taxon>
        <taxon>Diptera</taxon>
        <taxon>Brachycera</taxon>
        <taxon>Muscomorpha</taxon>
        <taxon>Ephydroidea</taxon>
        <taxon>Drosophilidae</taxon>
        <taxon>Drosophila</taxon>
        <taxon>Sophophora</taxon>
    </lineage>
</organism>
<gene>
    <name type="primary">Sap47</name>
    <name type="ORF">CG8884</name>
</gene>
<comment type="alternative products">
    <event type="alternative splicing"/>
    <isoform>
        <id>Q960T2-1</id>
        <name>A</name>
        <name>C</name>
        <name>D</name>
        <name>E</name>
        <name>H</name>
        <sequence type="displayed"/>
    </isoform>
    <isoform>
        <id>Q960T2-2</id>
        <name>B</name>
        <sequence type="described" ref="VSP_007393 VSP_007394"/>
    </isoform>
    <isoform>
        <id>Q960T2-4</id>
        <name>F</name>
        <name>1</name>
        <sequence type="described" ref="VSP_007389 VSP_007390 VSP_007393 VSP_007394"/>
    </isoform>
    <isoform>
        <id>Q960T2-5</id>
        <name>G</name>
        <sequence type="described" ref="VSP_007389"/>
    </isoform>
    <isoform>
        <id>Q960T2-3</id>
        <name>I</name>
        <name>2</name>
        <sequence type="described" ref="VSP_007389 VSP_007390 VSP_007391 VSP_007392"/>
    </isoform>
</comment>
<comment type="tissue specificity">
    <text evidence="4">Expressed specifically in neurons and transported to synaptic terminals.</text>
</comment>
<evidence type="ECO:0000255" key="1">
    <source>
        <dbReference type="PROSITE-ProRule" id="PRU00036"/>
    </source>
</evidence>
<evidence type="ECO:0000256" key="2">
    <source>
        <dbReference type="SAM" id="MobiDB-lite"/>
    </source>
</evidence>
<evidence type="ECO:0000269" key="3">
    <source>
    </source>
</evidence>
<evidence type="ECO:0000269" key="4">
    <source>
    </source>
</evidence>
<evidence type="ECO:0000303" key="5">
    <source>
    </source>
</evidence>
<protein>
    <recommendedName>
        <fullName>Synapse-associated protein of 47 kDa</fullName>
    </recommendedName>
</protein>
<feature type="chain" id="PRO_0000097584" description="Synapse-associated protein of 47 kDa">
    <location>
        <begin position="1"/>
        <end position="551"/>
    </location>
</feature>
<feature type="domain" description="BSD" evidence="1">
    <location>
        <begin position="295"/>
        <end position="347"/>
    </location>
</feature>
<feature type="region of interest" description="Disordered" evidence="2">
    <location>
        <begin position="20"/>
        <end position="72"/>
    </location>
</feature>
<feature type="region of interest" description="Disordered" evidence="2">
    <location>
        <begin position="117"/>
        <end position="198"/>
    </location>
</feature>
<feature type="region of interest" description="Disordered" evidence="2">
    <location>
        <begin position="360"/>
        <end position="391"/>
    </location>
</feature>
<feature type="region of interest" description="Disordered" evidence="2">
    <location>
        <begin position="487"/>
        <end position="551"/>
    </location>
</feature>
<feature type="compositionally biased region" description="Low complexity" evidence="2">
    <location>
        <begin position="26"/>
        <end position="59"/>
    </location>
</feature>
<feature type="compositionally biased region" description="Low complexity" evidence="2">
    <location>
        <begin position="117"/>
        <end position="128"/>
    </location>
</feature>
<feature type="compositionally biased region" description="Low complexity" evidence="2">
    <location>
        <begin position="137"/>
        <end position="146"/>
    </location>
</feature>
<feature type="compositionally biased region" description="Gly residues" evidence="2">
    <location>
        <begin position="182"/>
        <end position="197"/>
    </location>
</feature>
<feature type="compositionally biased region" description="Basic and acidic residues" evidence="2">
    <location>
        <begin position="373"/>
        <end position="386"/>
    </location>
</feature>
<feature type="compositionally biased region" description="Acidic residues" evidence="2">
    <location>
        <begin position="514"/>
        <end position="523"/>
    </location>
</feature>
<feature type="compositionally biased region" description="Polar residues" evidence="2">
    <location>
        <begin position="524"/>
        <end position="535"/>
    </location>
</feature>
<feature type="compositionally biased region" description="Acidic residues" evidence="2">
    <location>
        <begin position="536"/>
        <end position="551"/>
    </location>
</feature>
<feature type="modified residue" description="Phosphoserine" evidence="3">
    <location>
        <position position="178"/>
    </location>
</feature>
<feature type="modified residue" description="Phosphoserine" evidence="3">
    <location>
        <position position="182"/>
    </location>
</feature>
<feature type="modified residue" description="Phosphothreonine" evidence="3">
    <location>
        <position position="186"/>
    </location>
</feature>
<feature type="modified residue" description="Phosphoserine" evidence="3">
    <location>
        <position position="433"/>
    </location>
</feature>
<feature type="modified residue" description="Phosphothreonine" evidence="3">
    <location>
        <position position="530"/>
    </location>
</feature>
<feature type="splice variant" id="VSP_007389" description="In isoform F, isoform G and isoform I." evidence="5">
    <original>RLPKSASLVDSLVSEAT</original>
    <variation>S</variation>
    <location>
        <begin position="72"/>
        <end position="88"/>
    </location>
</feature>
<feature type="splice variant" id="VSP_007390" description="In isoform F and isoform I." evidence="5">
    <original>GKGDEVKI</original>
    <variation>V</variation>
    <location>
        <begin position="197"/>
        <end position="204"/>
    </location>
</feature>
<feature type="splice variant" id="VSP_007391" description="In isoform I." evidence="5">
    <original>AN</original>
    <variation>ED</variation>
    <location>
        <begin position="369"/>
        <end position="370"/>
    </location>
</feature>
<feature type="splice variant" id="VSP_007393" description="In isoform B and isoform F." evidence="5">
    <original>NEVAT</original>
    <variation>LAFNY</variation>
    <location>
        <begin position="370"/>
        <end position="374"/>
    </location>
</feature>
<feature type="splice variant" id="VSP_007392" description="In isoform I." evidence="5">
    <location>
        <begin position="371"/>
        <end position="551"/>
    </location>
</feature>
<feature type="splice variant" id="VSP_007394" description="In isoform B and isoform F." evidence="5">
    <location>
        <begin position="375"/>
        <end position="551"/>
    </location>
</feature>
<sequence length="551" mass="56980">MFSGLTNQFTSLVGAVKGGAGDEDVPAPTGDAPAAAPAASTSVEATASSAVDPEAAAAAGGEGLEGEEAGKRLPKSASLVDSLVSEATGWLGSAKGWLGNASIPSMPAMPSMPSMPAMPAMPSIPSIPGLRKGAGADGAEGAEGAVAGEGGAAASGAVSGGEDDDKSRYISATEGADSHPASGGGTPTGDEGQIGQGKGDEVKITTKVTQQAKHFGSFLSSAISKAGSKIKETVKDNTILDSFNKEQEAFIKGQGGVGNGAAPWIGHANEAKIKEEILGLSQDRRNFVRAPPAGVDFEFSYDTAYPTAIAIMAEDKALETMRFELVPKIITEENFWRNYFYRVSLIIQAAELGTLGADGVGQASSGEDANEVATKEKKSKTAEPAKGDSSVKAIAEQPKAVIEPEAQECDVQAAKSKAKAKAQAGKELGQKISESEFVSDDFQASSESDLAEIQDGMRKLGIDSMTQQALAATDEEQWEKDLEAELKDYEVVDEGGTGGDGGGGRRKGRKAGEDDTEADEDEPTISNLRTRSTNNDWEEYADLIEDTDDLK</sequence>
<accession>Q960T2</accession>
<accession>A4V2Z5</accession>
<accession>Q24502</accession>
<accession>Q24503</accession>
<accession>Q8INC9</accession>
<accession>Q9VF07</accession>
<name>SAP47_DROME</name>
<proteinExistence type="evidence at protein level"/>
<dbReference type="EMBL" id="X80110">
    <property type="protein sequence ID" value="CAA56415.1"/>
    <property type="molecule type" value="mRNA"/>
</dbReference>
<dbReference type="EMBL" id="X80111">
    <property type="protein sequence ID" value="CAA56416.1"/>
    <property type="molecule type" value="mRNA"/>
</dbReference>
<dbReference type="EMBL" id="AE014297">
    <property type="protein sequence ID" value="AAF55255.2"/>
    <property type="molecule type" value="Genomic_DNA"/>
</dbReference>
<dbReference type="EMBL" id="AE014297">
    <property type="protein sequence ID" value="AAN13682.1"/>
    <property type="molecule type" value="Genomic_DNA"/>
</dbReference>
<dbReference type="EMBL" id="AE014297">
    <property type="protein sequence ID" value="AAN13683.1"/>
    <property type="molecule type" value="Genomic_DNA"/>
</dbReference>
<dbReference type="EMBL" id="AE014297">
    <property type="protein sequence ID" value="AAN13684.1"/>
    <property type="molecule type" value="Genomic_DNA"/>
</dbReference>
<dbReference type="EMBL" id="AE014297">
    <property type="protein sequence ID" value="AAN13685.1"/>
    <property type="molecule type" value="Genomic_DNA"/>
</dbReference>
<dbReference type="EMBL" id="AE014297">
    <property type="protein sequence ID" value="AAN13686.2"/>
    <property type="molecule type" value="Genomic_DNA"/>
</dbReference>
<dbReference type="EMBL" id="AE014297">
    <property type="protein sequence ID" value="AAN13687.1"/>
    <property type="molecule type" value="Genomic_DNA"/>
</dbReference>
<dbReference type="EMBL" id="AE014297">
    <property type="protein sequence ID" value="AAN13688.1"/>
    <property type="molecule type" value="Genomic_DNA"/>
</dbReference>
<dbReference type="EMBL" id="AY051871">
    <property type="protein sequence ID" value="AAK93295.1"/>
    <property type="molecule type" value="mRNA"/>
</dbReference>
<dbReference type="PIR" id="S60653">
    <property type="entry name" value="S60653"/>
</dbReference>
<dbReference type="RefSeq" id="NP_001287350.1">
    <molecule id="Q960T2-3"/>
    <property type="nucleotide sequence ID" value="NM_001300421.1"/>
</dbReference>
<dbReference type="RefSeq" id="NP_524371.1">
    <molecule id="Q960T2-4"/>
    <property type="nucleotide sequence ID" value="NM_079647.4"/>
</dbReference>
<dbReference type="RefSeq" id="NP_732088.1">
    <molecule id="Q960T2-1"/>
    <property type="nucleotide sequence ID" value="NM_169684.3"/>
</dbReference>
<dbReference type="RefSeq" id="NP_732089.1">
    <molecule id="Q960T2-1"/>
    <property type="nucleotide sequence ID" value="NM_169685.3"/>
</dbReference>
<dbReference type="RefSeq" id="NP_732090.1">
    <molecule id="Q960T2-1"/>
    <property type="nucleotide sequence ID" value="NM_169686.3"/>
</dbReference>
<dbReference type="RefSeq" id="NP_732091.1">
    <molecule id="Q960T2-1"/>
    <property type="nucleotide sequence ID" value="NM_169687.3"/>
</dbReference>
<dbReference type="RefSeq" id="NP_732092.2">
    <molecule id="Q960T2-3"/>
    <property type="nucleotide sequence ID" value="NM_169688.3"/>
</dbReference>
<dbReference type="RefSeq" id="NP_732093.1">
    <molecule id="Q960T2-5"/>
    <property type="nucleotide sequence ID" value="NM_169689.3"/>
</dbReference>
<dbReference type="RefSeq" id="NP_732094.1">
    <molecule id="Q960T2-2"/>
    <property type="nucleotide sequence ID" value="NM_169690.3"/>
</dbReference>
<dbReference type="SMR" id="Q960T2"/>
<dbReference type="BioGRID" id="66992">
    <property type="interactions" value="16"/>
</dbReference>
<dbReference type="DIP" id="DIP-18495N"/>
<dbReference type="FunCoup" id="Q960T2">
    <property type="interactions" value="1124"/>
</dbReference>
<dbReference type="IntAct" id="Q960T2">
    <property type="interactions" value="3"/>
</dbReference>
<dbReference type="STRING" id="7227.FBpp0082658"/>
<dbReference type="iPTMnet" id="Q960T2"/>
<dbReference type="PaxDb" id="7227-FBpp0082658"/>
<dbReference type="DNASU" id="41938"/>
<dbReference type="EnsemblMetazoa" id="FBtr0083204">
    <molecule id="Q960T2-1"/>
    <property type="protein sequence ID" value="FBpp0082658"/>
    <property type="gene ID" value="FBgn0013334"/>
</dbReference>
<dbReference type="EnsemblMetazoa" id="FBtr0083205">
    <molecule id="Q960T2-2"/>
    <property type="protein sequence ID" value="FBpp0082659"/>
    <property type="gene ID" value="FBgn0013334"/>
</dbReference>
<dbReference type="EnsemblMetazoa" id="FBtr0083206">
    <molecule id="Q960T2-1"/>
    <property type="protein sequence ID" value="FBpp0082660"/>
    <property type="gene ID" value="FBgn0013334"/>
</dbReference>
<dbReference type="EnsemblMetazoa" id="FBtr0083207">
    <molecule id="Q960T2-1"/>
    <property type="protein sequence ID" value="FBpp0082661"/>
    <property type="gene ID" value="FBgn0013334"/>
</dbReference>
<dbReference type="EnsemblMetazoa" id="FBtr0083208">
    <molecule id="Q960T2-1"/>
    <property type="protein sequence ID" value="FBpp0082662"/>
    <property type="gene ID" value="FBgn0013334"/>
</dbReference>
<dbReference type="EnsemblMetazoa" id="FBtr0083209">
    <molecule id="Q960T2-4"/>
    <property type="protein sequence ID" value="FBpp0082663"/>
    <property type="gene ID" value="FBgn0013334"/>
</dbReference>
<dbReference type="EnsemblMetazoa" id="FBtr0083210">
    <molecule id="Q960T2-5"/>
    <property type="protein sequence ID" value="FBpp0082664"/>
    <property type="gene ID" value="FBgn0013334"/>
</dbReference>
<dbReference type="EnsemblMetazoa" id="FBtr0301655">
    <molecule id="Q960T2-3"/>
    <property type="protein sequence ID" value="FBpp0290869"/>
    <property type="gene ID" value="FBgn0013334"/>
</dbReference>
<dbReference type="EnsemblMetazoa" id="FBtr0344384">
    <molecule id="Q960T2-3"/>
    <property type="protein sequence ID" value="FBpp0310757"/>
    <property type="gene ID" value="FBgn0013334"/>
</dbReference>
<dbReference type="GeneID" id="41938"/>
<dbReference type="KEGG" id="dme:Dmel_CG8884"/>
<dbReference type="AGR" id="FB:FBgn0013334"/>
<dbReference type="CTD" id="41938"/>
<dbReference type="FlyBase" id="FBgn0013334">
    <property type="gene designation" value="Sap47"/>
</dbReference>
<dbReference type="VEuPathDB" id="VectorBase:FBgn0013334"/>
<dbReference type="eggNOG" id="KOG4310">
    <property type="taxonomic scope" value="Eukaryota"/>
</dbReference>
<dbReference type="GeneTree" id="ENSGT00390000007662"/>
<dbReference type="InParanoid" id="Q960T2"/>
<dbReference type="OMA" id="EESFWRN"/>
<dbReference type="OrthoDB" id="47923at2759"/>
<dbReference type="PhylomeDB" id="Q960T2"/>
<dbReference type="BioGRID-ORCS" id="41938">
    <property type="hits" value="0 hits in 1 CRISPR screen"/>
</dbReference>
<dbReference type="ChiTaRS" id="Sap47">
    <property type="organism name" value="fly"/>
</dbReference>
<dbReference type="GenomeRNAi" id="41938"/>
<dbReference type="PRO" id="PR:Q960T2"/>
<dbReference type="Proteomes" id="UP000000803">
    <property type="component" value="Chromosome 3R"/>
</dbReference>
<dbReference type="Bgee" id="FBgn0013334">
    <property type="expression patterns" value="Expressed in proximal medullary amacrine neuron Pm4 in brain and 295 other cell types or tissues"/>
</dbReference>
<dbReference type="ExpressionAtlas" id="Q960T2">
    <property type="expression patterns" value="baseline and differential"/>
</dbReference>
<dbReference type="GO" id="GO:0005737">
    <property type="term" value="C:cytoplasm"/>
    <property type="evidence" value="ECO:0000318"/>
    <property type="project" value="GO_Central"/>
</dbReference>
<dbReference type="GO" id="GO:0005794">
    <property type="term" value="C:Golgi apparatus"/>
    <property type="evidence" value="ECO:0000318"/>
    <property type="project" value="GO_Central"/>
</dbReference>
<dbReference type="GO" id="GO:0005634">
    <property type="term" value="C:nucleus"/>
    <property type="evidence" value="ECO:0000318"/>
    <property type="project" value="GO_Central"/>
</dbReference>
<dbReference type="GO" id="GO:0045202">
    <property type="term" value="C:synapse"/>
    <property type="evidence" value="ECO:0000314"/>
    <property type="project" value="UniProtKB"/>
</dbReference>
<dbReference type="GO" id="GO:0008306">
    <property type="term" value="P:associative learning"/>
    <property type="evidence" value="ECO:0000315"/>
    <property type="project" value="FlyBase"/>
</dbReference>
<dbReference type="GO" id="GO:0007268">
    <property type="term" value="P:chemical synaptic transmission"/>
    <property type="evidence" value="ECO:0000303"/>
    <property type="project" value="UniProtKB"/>
</dbReference>
<dbReference type="GO" id="GO:0048172">
    <property type="term" value="P:regulation of short-term neuronal synaptic plasticity"/>
    <property type="evidence" value="ECO:0000314"/>
    <property type="project" value="FlyBase"/>
</dbReference>
<dbReference type="GO" id="GO:0038203">
    <property type="term" value="P:TORC2 signaling"/>
    <property type="evidence" value="ECO:0000318"/>
    <property type="project" value="GO_Central"/>
</dbReference>
<dbReference type="FunFam" id="1.10.3970.10:FF:000001">
    <property type="entry name" value="synapse-associated protein 1 isoform X1"/>
    <property type="match status" value="1"/>
</dbReference>
<dbReference type="Gene3D" id="1.10.3970.10">
    <property type="entry name" value="BSD domain"/>
    <property type="match status" value="1"/>
</dbReference>
<dbReference type="InterPro" id="IPR005607">
    <property type="entry name" value="BSD_dom"/>
</dbReference>
<dbReference type="InterPro" id="IPR035925">
    <property type="entry name" value="BSD_dom_sf"/>
</dbReference>
<dbReference type="InterPro" id="IPR051494">
    <property type="entry name" value="BSD_domain-containing"/>
</dbReference>
<dbReference type="PANTHER" id="PTHR16019">
    <property type="entry name" value="SYNAPSE-ASSOCIATED PROTEIN"/>
    <property type="match status" value="1"/>
</dbReference>
<dbReference type="PANTHER" id="PTHR16019:SF6">
    <property type="entry name" value="SYNAPSE-ASSOCIATED PROTEIN 1"/>
    <property type="match status" value="1"/>
</dbReference>
<dbReference type="Pfam" id="PF03909">
    <property type="entry name" value="BSD"/>
    <property type="match status" value="1"/>
</dbReference>
<dbReference type="SMART" id="SM00751">
    <property type="entry name" value="BSD"/>
    <property type="match status" value="1"/>
</dbReference>
<dbReference type="SUPFAM" id="SSF140383">
    <property type="entry name" value="BSD domain-like"/>
    <property type="match status" value="1"/>
</dbReference>
<dbReference type="PROSITE" id="PS50858">
    <property type="entry name" value="BSD"/>
    <property type="match status" value="1"/>
</dbReference>
<reference key="1">
    <citation type="journal article" date="1995" name="Brain Res. Mol. Brain Res.">
        <title>The sap47 gene of Drosophila melanogaster codes for a novel conserved neuronal protein associated with synaptic terminals.</title>
        <authorList>
            <person name="Reichmuth C."/>
            <person name="Becker S."/>
            <person name="Benz M."/>
            <person name="Debel K."/>
            <person name="Reisch D."/>
            <person name="Heimbeck G."/>
            <person name="Hofbauer A."/>
            <person name="Klagges B."/>
            <person name="Pflugfelder G.O."/>
            <person name="Buchner E."/>
        </authorList>
    </citation>
    <scope>NUCLEOTIDE SEQUENCE [MRNA] (ISOFORMS F AND I)</scope>
    <scope>TISSUE SPECIFICITY</scope>
    <source>
        <strain>Berlin</strain>
        <tissue>Head</tissue>
    </source>
</reference>
<reference key="2">
    <citation type="journal article" date="2000" name="Science">
        <title>The genome sequence of Drosophila melanogaster.</title>
        <authorList>
            <person name="Adams M.D."/>
            <person name="Celniker S.E."/>
            <person name="Holt R.A."/>
            <person name="Evans C.A."/>
            <person name="Gocayne J.D."/>
            <person name="Amanatides P.G."/>
            <person name="Scherer S.E."/>
            <person name="Li P.W."/>
            <person name="Hoskins R.A."/>
            <person name="Galle R.F."/>
            <person name="George R.A."/>
            <person name="Lewis S.E."/>
            <person name="Richards S."/>
            <person name="Ashburner M."/>
            <person name="Henderson S.N."/>
            <person name="Sutton G.G."/>
            <person name="Wortman J.R."/>
            <person name="Yandell M.D."/>
            <person name="Zhang Q."/>
            <person name="Chen L.X."/>
            <person name="Brandon R.C."/>
            <person name="Rogers Y.-H.C."/>
            <person name="Blazej R.G."/>
            <person name="Champe M."/>
            <person name="Pfeiffer B.D."/>
            <person name="Wan K.H."/>
            <person name="Doyle C."/>
            <person name="Baxter E.G."/>
            <person name="Helt G."/>
            <person name="Nelson C.R."/>
            <person name="Miklos G.L.G."/>
            <person name="Abril J.F."/>
            <person name="Agbayani A."/>
            <person name="An H.-J."/>
            <person name="Andrews-Pfannkoch C."/>
            <person name="Baldwin D."/>
            <person name="Ballew R.M."/>
            <person name="Basu A."/>
            <person name="Baxendale J."/>
            <person name="Bayraktaroglu L."/>
            <person name="Beasley E.M."/>
            <person name="Beeson K.Y."/>
            <person name="Benos P.V."/>
            <person name="Berman B.P."/>
            <person name="Bhandari D."/>
            <person name="Bolshakov S."/>
            <person name="Borkova D."/>
            <person name="Botchan M.R."/>
            <person name="Bouck J."/>
            <person name="Brokstein P."/>
            <person name="Brottier P."/>
            <person name="Burtis K.C."/>
            <person name="Busam D.A."/>
            <person name="Butler H."/>
            <person name="Cadieu E."/>
            <person name="Center A."/>
            <person name="Chandra I."/>
            <person name="Cherry J.M."/>
            <person name="Cawley S."/>
            <person name="Dahlke C."/>
            <person name="Davenport L.B."/>
            <person name="Davies P."/>
            <person name="de Pablos B."/>
            <person name="Delcher A."/>
            <person name="Deng Z."/>
            <person name="Mays A.D."/>
            <person name="Dew I."/>
            <person name="Dietz S.M."/>
            <person name="Dodson K."/>
            <person name="Doup L.E."/>
            <person name="Downes M."/>
            <person name="Dugan-Rocha S."/>
            <person name="Dunkov B.C."/>
            <person name="Dunn P."/>
            <person name="Durbin K.J."/>
            <person name="Evangelista C.C."/>
            <person name="Ferraz C."/>
            <person name="Ferriera S."/>
            <person name="Fleischmann W."/>
            <person name="Fosler C."/>
            <person name="Gabrielian A.E."/>
            <person name="Garg N.S."/>
            <person name="Gelbart W.M."/>
            <person name="Glasser K."/>
            <person name="Glodek A."/>
            <person name="Gong F."/>
            <person name="Gorrell J.H."/>
            <person name="Gu Z."/>
            <person name="Guan P."/>
            <person name="Harris M."/>
            <person name="Harris N.L."/>
            <person name="Harvey D.A."/>
            <person name="Heiman T.J."/>
            <person name="Hernandez J.R."/>
            <person name="Houck J."/>
            <person name="Hostin D."/>
            <person name="Houston K.A."/>
            <person name="Howland T.J."/>
            <person name="Wei M.-H."/>
            <person name="Ibegwam C."/>
            <person name="Jalali M."/>
            <person name="Kalush F."/>
            <person name="Karpen G.H."/>
            <person name="Ke Z."/>
            <person name="Kennison J.A."/>
            <person name="Ketchum K.A."/>
            <person name="Kimmel B.E."/>
            <person name="Kodira C.D."/>
            <person name="Kraft C.L."/>
            <person name="Kravitz S."/>
            <person name="Kulp D."/>
            <person name="Lai Z."/>
            <person name="Lasko P."/>
            <person name="Lei Y."/>
            <person name="Levitsky A.A."/>
            <person name="Li J.H."/>
            <person name="Li Z."/>
            <person name="Liang Y."/>
            <person name="Lin X."/>
            <person name="Liu X."/>
            <person name="Mattei B."/>
            <person name="McIntosh T.C."/>
            <person name="McLeod M.P."/>
            <person name="McPherson D."/>
            <person name="Merkulov G."/>
            <person name="Milshina N.V."/>
            <person name="Mobarry C."/>
            <person name="Morris J."/>
            <person name="Moshrefi A."/>
            <person name="Mount S.M."/>
            <person name="Moy M."/>
            <person name="Murphy B."/>
            <person name="Murphy L."/>
            <person name="Muzny D.M."/>
            <person name="Nelson D.L."/>
            <person name="Nelson D.R."/>
            <person name="Nelson K.A."/>
            <person name="Nixon K."/>
            <person name="Nusskern D.R."/>
            <person name="Pacleb J.M."/>
            <person name="Palazzolo M."/>
            <person name="Pittman G.S."/>
            <person name="Pan S."/>
            <person name="Pollard J."/>
            <person name="Puri V."/>
            <person name="Reese M.G."/>
            <person name="Reinert K."/>
            <person name="Remington K."/>
            <person name="Saunders R.D.C."/>
            <person name="Scheeler F."/>
            <person name="Shen H."/>
            <person name="Shue B.C."/>
            <person name="Siden-Kiamos I."/>
            <person name="Simpson M."/>
            <person name="Skupski M.P."/>
            <person name="Smith T.J."/>
            <person name="Spier E."/>
            <person name="Spradling A.C."/>
            <person name="Stapleton M."/>
            <person name="Strong R."/>
            <person name="Sun E."/>
            <person name="Svirskas R."/>
            <person name="Tector C."/>
            <person name="Turner R."/>
            <person name="Venter E."/>
            <person name="Wang A.H."/>
            <person name="Wang X."/>
            <person name="Wang Z.-Y."/>
            <person name="Wassarman D.A."/>
            <person name="Weinstock G.M."/>
            <person name="Weissenbach J."/>
            <person name="Williams S.M."/>
            <person name="Woodage T."/>
            <person name="Worley K.C."/>
            <person name="Wu D."/>
            <person name="Yang S."/>
            <person name="Yao Q.A."/>
            <person name="Ye J."/>
            <person name="Yeh R.-F."/>
            <person name="Zaveri J.S."/>
            <person name="Zhan M."/>
            <person name="Zhang G."/>
            <person name="Zhao Q."/>
            <person name="Zheng L."/>
            <person name="Zheng X.H."/>
            <person name="Zhong F.N."/>
            <person name="Zhong W."/>
            <person name="Zhou X."/>
            <person name="Zhu S.C."/>
            <person name="Zhu X."/>
            <person name="Smith H.O."/>
            <person name="Gibbs R.A."/>
            <person name="Myers E.W."/>
            <person name="Rubin G.M."/>
            <person name="Venter J.C."/>
        </authorList>
    </citation>
    <scope>NUCLEOTIDE SEQUENCE [LARGE SCALE GENOMIC DNA]</scope>
    <source>
        <strain>Berkeley</strain>
    </source>
</reference>
<reference key="3">
    <citation type="journal article" date="2002" name="Genome Biol.">
        <title>Annotation of the Drosophila melanogaster euchromatic genome: a systematic review.</title>
        <authorList>
            <person name="Misra S."/>
            <person name="Crosby M.A."/>
            <person name="Mungall C.J."/>
            <person name="Matthews B.B."/>
            <person name="Campbell K.S."/>
            <person name="Hradecky P."/>
            <person name="Huang Y."/>
            <person name="Kaminker J.S."/>
            <person name="Millburn G.H."/>
            <person name="Prochnik S.E."/>
            <person name="Smith C.D."/>
            <person name="Tupy J.L."/>
            <person name="Whitfield E.J."/>
            <person name="Bayraktaroglu L."/>
            <person name="Berman B.P."/>
            <person name="Bettencourt B.R."/>
            <person name="Celniker S.E."/>
            <person name="de Grey A.D.N.J."/>
            <person name="Drysdale R.A."/>
            <person name="Harris N.L."/>
            <person name="Richter J."/>
            <person name="Russo S."/>
            <person name="Schroeder A.J."/>
            <person name="Shu S.Q."/>
            <person name="Stapleton M."/>
            <person name="Yamada C."/>
            <person name="Ashburner M."/>
            <person name="Gelbart W.M."/>
            <person name="Rubin G.M."/>
            <person name="Lewis S.E."/>
        </authorList>
    </citation>
    <scope>GENOME REANNOTATION</scope>
    <scope>ALTERNATIVE SPLICING</scope>
    <source>
        <strain>Berkeley</strain>
    </source>
</reference>
<reference key="4">
    <citation type="journal article" date="2002" name="Genome Biol.">
        <title>A Drosophila full-length cDNA resource.</title>
        <authorList>
            <person name="Stapleton M."/>
            <person name="Carlson J.W."/>
            <person name="Brokstein P."/>
            <person name="Yu C."/>
            <person name="Champe M."/>
            <person name="George R.A."/>
            <person name="Guarin H."/>
            <person name="Kronmiller B."/>
            <person name="Pacleb J.M."/>
            <person name="Park S."/>
            <person name="Wan K.H."/>
            <person name="Rubin G.M."/>
            <person name="Celniker S.E."/>
        </authorList>
    </citation>
    <scope>NUCLEOTIDE SEQUENCE [LARGE SCALE MRNA] (ISOFORM A)</scope>
    <source>
        <strain>Berkeley</strain>
        <tissue>Embryo</tissue>
    </source>
</reference>
<reference key="5">
    <citation type="journal article" date="2008" name="J. Proteome Res.">
        <title>Phosphoproteome analysis of Drosophila melanogaster embryos.</title>
        <authorList>
            <person name="Zhai B."/>
            <person name="Villen J."/>
            <person name="Beausoleil S.A."/>
            <person name="Mintseris J."/>
            <person name="Gygi S.P."/>
        </authorList>
    </citation>
    <scope>PHOSPHORYLATION [LARGE SCALE ANALYSIS] AT SER-178; SER-182; THR-186; SER-433 AND THR-530</scope>
    <scope>IDENTIFICATION BY MASS SPECTROMETRY</scope>
    <source>
        <tissue>Embryo</tissue>
    </source>
</reference>